<evidence type="ECO:0000269" key="1">
    <source>
    </source>
</evidence>
<evidence type="ECO:0000269" key="2">
    <source>
    </source>
</evidence>
<evidence type="ECO:0000303" key="3">
    <source>
    </source>
</evidence>
<evidence type="ECO:0000305" key="4"/>
<evidence type="ECO:0000305" key="5">
    <source>
    </source>
</evidence>
<evidence type="ECO:0000312" key="6">
    <source>
        <dbReference type="EMBL" id="AAY84581.1"/>
    </source>
</evidence>
<feature type="chain" id="PRO_0000451285" description="Metacaspase-3">
    <location>
        <begin position="1"/>
        <end position="358"/>
    </location>
</feature>
<feature type="region of interest" description="Important for catalytic activity" evidence="2">
    <location>
        <begin position="1"/>
        <end position="84"/>
    </location>
</feature>
<feature type="active site" evidence="5">
    <location>
        <position position="168"/>
    </location>
</feature>
<feature type="active site" evidence="5">
    <location>
        <position position="223"/>
    </location>
</feature>
<feature type="mutagenesis site" description="Loss of catalytic activity." evidence="2">
    <original>H</original>
    <variation>A</variation>
    <location>
        <position position="168"/>
    </location>
</feature>
<feature type="mutagenesis site" description="Loss of catalytic activity." evidence="2">
    <original>C</original>
    <variation>A</variation>
    <location>
        <position position="223"/>
    </location>
</feature>
<gene>
    <name evidence="3" type="primary">MCA3</name>
</gene>
<proteinExistence type="evidence at protein level"/>
<protein>
    <recommendedName>
        <fullName evidence="3">Metacaspase-3</fullName>
        <ecNumber evidence="2">3.4.22.-</ecNumber>
    </recommendedName>
    <alternativeName>
        <fullName evidence="3">TcMCA3</fullName>
    </alternativeName>
</protein>
<dbReference type="EC" id="3.4.22.-" evidence="2"/>
<dbReference type="EMBL" id="DQ015870">
    <property type="protein sequence ID" value="AAY84581.1"/>
    <property type="molecule type" value="Genomic_DNA"/>
</dbReference>
<dbReference type="SMR" id="Q2VLK6"/>
<dbReference type="MEROPS" id="C14.044"/>
<dbReference type="GO" id="GO:0005737">
    <property type="term" value="C:cytoplasm"/>
    <property type="evidence" value="ECO:0000314"/>
    <property type="project" value="UniProtKB"/>
</dbReference>
<dbReference type="GO" id="GO:0005634">
    <property type="term" value="C:nucleus"/>
    <property type="evidence" value="ECO:0000314"/>
    <property type="project" value="UniProtKB"/>
</dbReference>
<dbReference type="GO" id="GO:0004197">
    <property type="term" value="F:cysteine-type endopeptidase activity"/>
    <property type="evidence" value="ECO:0000314"/>
    <property type="project" value="UniProtKB"/>
</dbReference>
<dbReference type="GO" id="GO:0046872">
    <property type="term" value="F:metal ion binding"/>
    <property type="evidence" value="ECO:0007669"/>
    <property type="project" value="UniProtKB-KW"/>
</dbReference>
<dbReference type="GO" id="GO:0006508">
    <property type="term" value="P:proteolysis"/>
    <property type="evidence" value="ECO:0000314"/>
    <property type="project" value="UniProtKB"/>
</dbReference>
<dbReference type="Gene3D" id="3.40.50.12660">
    <property type="match status" value="1"/>
</dbReference>
<dbReference type="InterPro" id="IPR050452">
    <property type="entry name" value="Metacaspase"/>
</dbReference>
<dbReference type="InterPro" id="IPR011600">
    <property type="entry name" value="Pept_C14_caspase"/>
</dbReference>
<dbReference type="PANTHER" id="PTHR48104:SF30">
    <property type="entry name" value="METACASPASE-1"/>
    <property type="match status" value="1"/>
</dbReference>
<dbReference type="PANTHER" id="PTHR48104">
    <property type="entry name" value="METACASPASE-4"/>
    <property type="match status" value="1"/>
</dbReference>
<dbReference type="Pfam" id="PF00656">
    <property type="entry name" value="Peptidase_C14"/>
    <property type="match status" value="1"/>
</dbReference>
<name>MCA3_TRYCC</name>
<organism>
    <name type="scientific">Trypanosoma cruzi (strain CL Brener)</name>
    <dbReference type="NCBI Taxonomy" id="353153"/>
    <lineage>
        <taxon>Eukaryota</taxon>
        <taxon>Discoba</taxon>
        <taxon>Euglenozoa</taxon>
        <taxon>Kinetoplastea</taxon>
        <taxon>Metakinetoplastina</taxon>
        <taxon>Trypanosomatida</taxon>
        <taxon>Trypanosomatidae</taxon>
        <taxon>Trypanosoma</taxon>
        <taxon>Schizotrypanum</taxon>
    </lineage>
</organism>
<keyword id="KW-0106">Calcium</keyword>
<keyword id="KW-0963">Cytoplasm</keyword>
<keyword id="KW-0378">Hydrolase</keyword>
<keyword id="KW-0479">Metal-binding</keyword>
<keyword id="KW-0539">Nucleus</keyword>
<keyword id="KW-0645">Protease</keyword>
<keyword id="KW-0788">Thiol protease</keyword>
<reference evidence="6" key="1">
    <citation type="journal article" date="2006" name="Mol. Biochem. Parasitol.">
        <title>Metacaspases of Trypanosoma cruzi: possible candidates for programmed cell death mediators.</title>
        <authorList>
            <person name="Kosec G."/>
            <person name="Alvarez V.E."/>
            <person name="Aguero F."/>
            <person name="Sanchez D."/>
            <person name="Dolinar M."/>
            <person name="Turk B."/>
            <person name="Turk V."/>
            <person name="Cazzulo J.J."/>
        </authorList>
    </citation>
    <scope>NUCLEOTIDE SEQUENCE [GENOMIC DNA]</scope>
    <scope>DEVELOPMENTAL STAGE</scope>
    <scope>SUBCELLULAR LOCATION</scope>
    <source>
        <strain evidence="6">CL Brener</strain>
    </source>
</reference>
<reference evidence="4" key="2">
    <citation type="journal article" date="2012" name="Cell Death Differ.">
        <title>Antagonic activities of Trypanosoma cruzi metacaspases affect the balance between cell proliferation, death and differentiation.</title>
        <authorList>
            <person name="Laverriere M."/>
            <person name="Cazzulo J.J."/>
            <person name="Alvarez V.E."/>
        </authorList>
    </citation>
    <scope>FUNCTION</scope>
    <scope>CATALYTIC ACTIVITY</scope>
    <scope>ACTIVITY REGULATION</scope>
    <scope>SUBCELLULAR LOCATION</scope>
    <scope>DEVELOPMENTAL STAGE</scope>
    <scope>LACK OF PROTEOLYTIC CLEAVAGE</scope>
    <scope>ACTIVE SITE</scope>
    <scope>MUTAGENESIS OF HIS-168 AND CYS-223</scope>
</reference>
<sequence>MGFDFGCLLKLCSTVLKPGGAPGPINYMEIGLNLIKIAAPYIVQYLGIMERPPRVDVEEFFQQAEVTEGFKPWEAPTHVSGTFRALFIGINYYCTSAELSGCCNDVKQIIATLQRKRIPIDEMSILVDERGFPGANGLPTRDNIVRYMAWLFGGAKPGDVLFMHYSGHGTHTRATSDTEEKFDQCLAPVDFSTKGCILDNDIFRILLSGLLQGVRLTVVFDCCHSGSMLDLPYTFVGSRSLRRSVAGHMQRIRKGNDCAGDVLMISGCADEQTSADVSNAATFGTGASGAGGAATQCLAYTILKVSNLSYQDMLIATRDMLRRKGFTQVPQLSASKPINLQQKFSLMTTFEVDPAVAT</sequence>
<accession>Q2VLK6</accession>
<comment type="function">
    <text evidence="2">Cysteine protease that cleaves specifically after arginine or lysine residues (PubMed:22402587). In epimastigotes, may play a role in cell cycle G1/S transition (PubMed:22402587).</text>
</comment>
<comment type="activity regulation">
    <text evidence="2">Activated by Ca(2+).</text>
</comment>
<comment type="subcellular location">
    <subcellularLocation>
        <location evidence="1 2">Cytoplasm</location>
    </subcellularLocation>
    <subcellularLocation>
        <location evidence="1">Nucleus</location>
    </subcellularLocation>
    <text evidence="1">Localizes to cytoplasm in epimastigotes (PubMed:16213036). Translocates to the nucleus following apoptosis induced by human serum (PubMed:16213036).</text>
</comment>
<comment type="developmental stage">
    <text evidence="1 2">Expressed in epimastigotes, amastigotes and cell derived trypomastigotes and in metacyclic trypomastigotes (at protein level).</text>
</comment>
<comment type="PTM">
    <text evidence="2">In epimastigotes, the unprocessed enzyme appears to be the main form (PubMed:22402587). Auto-processing is dispensable for catalytic activity towards small oligopeptide substrates (PubMed:22402587).</text>
</comment>
<comment type="similarity">
    <text evidence="4">Belongs to the peptidase C14B family.</text>
</comment>